<feature type="chain" id="PRO_0000448408" description="27 kDa core protein">
    <location>
        <begin position="1"/>
        <end position="270"/>
    </location>
</feature>
<organism>
    <name type="scientific">Fowlpox virus</name>
    <name type="common">FPV</name>
    <dbReference type="NCBI Taxonomy" id="10261"/>
    <lineage>
        <taxon>Viruses</taxon>
        <taxon>Varidnaviria</taxon>
        <taxon>Bamfordvirae</taxon>
        <taxon>Nucleocytoviricota</taxon>
        <taxon>Pokkesviricetes</taxon>
        <taxon>Chitovirales</taxon>
        <taxon>Poxviridae</taxon>
        <taxon>Chordopoxvirinae</taxon>
        <taxon>Avipoxvirus</taxon>
    </lineage>
</organism>
<sequence length="270" mass="31962">MEIHRLNSYTSVDYLCNSSNNVYILLGDTDEFINKRIILLMNNIELYYVYEISVNDEDELYHSFITSNVVCPIKQRINLMLYKEYKKVIGSCVINNEGNIKMYSQPDKLHVYVLCYRCNGDIKTITMIKCHQLLKPEKEIVIDGYQVNDSSFFYTSPNLIKQINMDKSDLFYKNILLRKEINCLIRKQESSNLYCILNKHIVSLSDTDIWKVIISDELFDSSDIEKLVKFDYDRDKFHAFVRAWYSGQLSNCKEENETIKTVYEMIEKRI</sequence>
<reference key="1">
    <citation type="journal article" date="2004" name="J. Gen. Virol.">
        <title>Comparison of the genome sequence of FP9, an attenuated, tissue culture-adapted European fowlpox virus, with those of virulent American and European viruses.</title>
        <authorList>
            <person name="Skinner M.A."/>
            <person name="Laidlaw S.M."/>
        </authorList>
    </citation>
    <scope>NUCLEOTIDE SEQUENCE [GENOMIC DNA]</scope>
    <source>
        <strain>FP-9 / Isolate HP1-438 Munich</strain>
    </source>
</reference>
<accession>P0DTB0</accession>
<accession>Q70H83</accession>
<accession>Q9J5E2</accession>
<keyword id="KW-0426">Late protein</keyword>
<keyword id="KW-0946">Virion</keyword>
<gene>
    <name type="ordered locus">FPV069</name>
    <name type="ordered locus">fp9.069</name>
</gene>
<name>D3_FOWPV</name>
<dbReference type="EMBL" id="AJ581527">
    <property type="protein sequence ID" value="CAE52613.1"/>
    <property type="molecule type" value="Genomic_DNA"/>
</dbReference>
<dbReference type="RefSeq" id="NP_039032.1">
    <property type="nucleotide sequence ID" value="NC_002188.1"/>
</dbReference>
<dbReference type="GeneID" id="1486617"/>
<dbReference type="KEGG" id="vg:1486617"/>
<dbReference type="OrthoDB" id="14516at10239"/>
<dbReference type="Proteomes" id="UP000150838">
    <property type="component" value="Segment"/>
</dbReference>
<dbReference type="GO" id="GO:0044423">
    <property type="term" value="C:virion component"/>
    <property type="evidence" value="ECO:0007669"/>
    <property type="project" value="UniProtKB-KW"/>
</dbReference>
<dbReference type="InterPro" id="IPR007660">
    <property type="entry name" value="Poxvirus_D3"/>
</dbReference>
<dbReference type="Pfam" id="PF04580">
    <property type="entry name" value="Pox_D3"/>
    <property type="match status" value="1"/>
</dbReference>
<protein>
    <recommendedName>
        <fullName>27 kDa core protein</fullName>
    </recommendedName>
</protein>
<comment type="function">
    <text evidence="1">Late protein which is part of a large complex required for early virion morphogenesis. This complex participates in the formation of virosomes and the incorporation of virosomal contents into nascent immature virions (By similarity).</text>
</comment>
<comment type="subcellular location">
    <subcellularLocation>
        <location evidence="1">Virion</location>
    </subcellularLocation>
    <text evidence="1">Localizes to the virion core.</text>
</comment>
<comment type="induction">
    <text>Expressed in the late phase of the viral replicative cycle.</text>
</comment>
<comment type="similarity">
    <text evidence="2">Belongs to the chordopoxvirinae D3 family.</text>
</comment>
<organismHost>
    <name type="scientific">Vertebrata</name>
    <dbReference type="NCBI Taxonomy" id="7742"/>
</organismHost>
<evidence type="ECO:0000250" key="1"/>
<evidence type="ECO:0000305" key="2"/>
<proteinExistence type="evidence at transcript level"/>